<proteinExistence type="inferred from homology"/>
<sequence>MAEIVASDEMNEYFNTLEGTLKKEIDIVNDARSRGKDPKPHVEIPLAKDLADRVENLIGVKGVAELIRKLEETMSREEAALALGREVAQGKVGEFDSKSEAIEAAIRVSVAMLTEGVVAAPIEGIDRASIGKNDDGSEYVSIFYAGPIRSAGGTAQALSVLVGDYVRRGVGIDRYKPRKEEVERYIEEIMLYKRVASLQYTPSEEEIRLIVENCPICIDGEPTEAEEVEGHRNLERIDTNRVRGGMALVLAEGLALKAPKIQKHVKNLKIDGWEWLEQLISGVKSSSESDEDEETDGKPKIKPKDKYMRDLIAGRPVFSHPSRPGGFRLRYGRSRNTSFAAAGISPAGMIVMDDFIAPGTQLKVERPGKAAGMAPVDSIEGPTVRLNNGDVIRIDTIDEAYALRSEVEEIIDIGEILINYGDFLENNHPLAPSPYCFEWWIQEYRKAAPDTETNEAELKEPTQEVALDLCKELNIPLHPKFTYLWHDIDNSQYTALADLISKDGLLEADGSFLKLPLQRTIDTGMKKVLEDLLVQHKIQGQALTIEEPLPLIHSLGLDEELSKGWDSLGHEELLENINEIAGFVVRPRAPTRIGARMGRPEKSDKRKMTPAPHALFPIAEAGGNTRSLEKAANFKVNTNSKAGTIPVEIGNRICPACGVEGFEFRCECGEYTLPKLFCPRCGISVNKEKCPKCNSKTTCTSMRKIDFKSIYQKAFESIGERDHLDSFKGVKKMMSKHMTPEPLEKGILRAKHGLFTFKDGTVRYDMSDIPLTHIRPAEIGVSCERMIELGYLKDIYGKPLIDSEQVLCLKVQDLVISYDAADYILRITQYIDDLLVKYYKVAPYYNAKHIDDIVGVLLMGLAPHTSAGVLGRLIGFTTASVGYAHPYFHAAKRRNCDGDEDCVMLLMDGLLNFSRDYLPDKRGGQMDAPLVLTTRLDPSEVDKEAHNIDMCASYPLEFYEATQNIANPKDFEGTMDLVSGRLGTTLQYEEFMFTHDTSNIAAGPLKSAYKTLGTMVEKMDAQLELAKKIRAVDAPDVAERVLTSHFLPDMFGNLRAFSRQRTRCVKCAAKFRRPPLTGSCPKCGGRVILTVHEGAVKKYLQVSIKIAEEYNVSSYTKQRIELIGYDMKSLFENDKSKQMGLSDFM</sequence>
<reference key="1">
    <citation type="journal article" date="2009" name="ISME J.">
        <title>The genome sequence of the psychrophilic archaeon, Methanococcoides burtonii: the role of genome evolution in cold adaptation.</title>
        <authorList>
            <person name="Allen M.A."/>
            <person name="Lauro F.M."/>
            <person name="Williams T.J."/>
            <person name="Burg D."/>
            <person name="Siddiqui K.S."/>
            <person name="De Francisci D."/>
            <person name="Chong K.W."/>
            <person name="Pilak O."/>
            <person name="Chew H.H."/>
            <person name="De Maere M.Z."/>
            <person name="Ting L."/>
            <person name="Katrib M."/>
            <person name="Ng C."/>
            <person name="Sowers K.R."/>
            <person name="Galperin M.Y."/>
            <person name="Anderson I.J."/>
            <person name="Ivanova N."/>
            <person name="Dalin E."/>
            <person name="Martinez M."/>
            <person name="Lapidus A."/>
            <person name="Hauser L."/>
            <person name="Land M."/>
            <person name="Thomas T."/>
            <person name="Cavicchioli R."/>
        </authorList>
    </citation>
    <scope>NUCLEOTIDE SEQUENCE [LARGE SCALE GENOMIC DNA]</scope>
    <source>
        <strain>DSM 6242 / NBRC 107633 / OCM 468 / ACE-M</strain>
    </source>
</reference>
<keyword id="KW-0235">DNA replication</keyword>
<keyword id="KW-0238">DNA-binding</keyword>
<keyword id="KW-0239">DNA-directed DNA polymerase</keyword>
<keyword id="KW-0269">Exonuclease</keyword>
<keyword id="KW-0378">Hydrolase</keyword>
<keyword id="KW-0511">Multifunctional enzyme</keyword>
<keyword id="KW-0540">Nuclease</keyword>
<keyword id="KW-0548">Nucleotidyltransferase</keyword>
<keyword id="KW-0808">Transferase</keyword>
<protein>
    <recommendedName>
        <fullName evidence="2">DNA polymerase II large subunit</fullName>
        <shortName evidence="2">Pol II</shortName>
        <ecNumber evidence="2">2.7.7.7</ecNumber>
    </recommendedName>
    <alternativeName>
        <fullName evidence="2">Exodeoxyribonuclease large subunit</fullName>
        <ecNumber evidence="2">3.1.11.1</ecNumber>
    </alternativeName>
</protein>
<feature type="chain" id="PRO_0000294685" description="DNA polymerase II large subunit">
    <location>
        <begin position="1"/>
        <end position="1145"/>
    </location>
</feature>
<feature type="region of interest" description="Disordered" evidence="3">
    <location>
        <begin position="284"/>
        <end position="303"/>
    </location>
</feature>
<accession>Q12TF2</accession>
<evidence type="ECO:0000250" key="1"/>
<evidence type="ECO:0000255" key="2">
    <source>
        <dbReference type="HAMAP-Rule" id="MF_00324"/>
    </source>
</evidence>
<evidence type="ECO:0000256" key="3">
    <source>
        <dbReference type="SAM" id="MobiDB-lite"/>
    </source>
</evidence>
<evidence type="ECO:0000305" key="4"/>
<dbReference type="EC" id="2.7.7.7" evidence="2"/>
<dbReference type="EC" id="3.1.11.1" evidence="2"/>
<dbReference type="EMBL" id="CP000300">
    <property type="protein sequence ID" value="ABE53274.1"/>
    <property type="status" value="ALT_INIT"/>
    <property type="molecule type" value="Genomic_DNA"/>
</dbReference>
<dbReference type="RefSeq" id="WP_048063431.1">
    <property type="nucleotide sequence ID" value="NC_007955.1"/>
</dbReference>
<dbReference type="SMR" id="Q12TF2"/>
<dbReference type="STRING" id="259564.Mbur_2423"/>
<dbReference type="GeneID" id="3999013"/>
<dbReference type="KEGG" id="mbu:Mbur_2423"/>
<dbReference type="HOGENOM" id="CLU_001154_0_0_2"/>
<dbReference type="OrthoDB" id="7529at2157"/>
<dbReference type="Proteomes" id="UP000001979">
    <property type="component" value="Chromosome"/>
</dbReference>
<dbReference type="GO" id="GO:0003677">
    <property type="term" value="F:DNA binding"/>
    <property type="evidence" value="ECO:0007669"/>
    <property type="project" value="UniProtKB-UniRule"/>
</dbReference>
<dbReference type="GO" id="GO:0003887">
    <property type="term" value="F:DNA-directed DNA polymerase activity"/>
    <property type="evidence" value="ECO:0007669"/>
    <property type="project" value="UniProtKB-UniRule"/>
</dbReference>
<dbReference type="GO" id="GO:0008310">
    <property type="term" value="F:single-stranded DNA 3'-5' DNA exonuclease activity"/>
    <property type="evidence" value="ECO:0007669"/>
    <property type="project" value="UniProtKB-EC"/>
</dbReference>
<dbReference type="GO" id="GO:0006308">
    <property type="term" value="P:DNA catabolic process"/>
    <property type="evidence" value="ECO:0007669"/>
    <property type="project" value="UniProtKB-UniRule"/>
</dbReference>
<dbReference type="GO" id="GO:0006261">
    <property type="term" value="P:DNA-templated DNA replication"/>
    <property type="evidence" value="ECO:0007669"/>
    <property type="project" value="UniProtKB-UniRule"/>
</dbReference>
<dbReference type="HAMAP" id="MF_00324">
    <property type="entry name" value="DNApol_II_L_arch"/>
    <property type="match status" value="1"/>
</dbReference>
<dbReference type="InterPro" id="IPR004475">
    <property type="entry name" value="PolC_DP2"/>
</dbReference>
<dbReference type="InterPro" id="IPR056172">
    <property type="entry name" value="PolC_DP2_cat_dom"/>
</dbReference>
<dbReference type="InterPro" id="IPR056171">
    <property type="entry name" value="PolC_DP2_central_dom"/>
</dbReference>
<dbReference type="InterPro" id="IPR016033">
    <property type="entry name" value="PolC_DP2_N"/>
</dbReference>
<dbReference type="NCBIfam" id="TIGR00354">
    <property type="entry name" value="polC"/>
    <property type="match status" value="1"/>
</dbReference>
<dbReference type="NCBIfam" id="NF003103">
    <property type="entry name" value="PRK04023.1"/>
    <property type="match status" value="1"/>
</dbReference>
<dbReference type="PANTHER" id="PTHR42210">
    <property type="entry name" value="DNA POLYMERASE II LARGE SUBUNIT"/>
    <property type="match status" value="1"/>
</dbReference>
<dbReference type="PANTHER" id="PTHR42210:SF1">
    <property type="entry name" value="DNA POLYMERASE II LARGE SUBUNIT"/>
    <property type="match status" value="1"/>
</dbReference>
<dbReference type="Pfam" id="PF24846">
    <property type="entry name" value="PolC_DP2_cat"/>
    <property type="match status" value="1"/>
</dbReference>
<dbReference type="Pfam" id="PF24844">
    <property type="entry name" value="PolC_DP2_central"/>
    <property type="match status" value="1"/>
</dbReference>
<dbReference type="Pfam" id="PF03833">
    <property type="entry name" value="PolC_DP2_N"/>
    <property type="match status" value="1"/>
</dbReference>
<dbReference type="PIRSF" id="PIRSF016275">
    <property type="entry name" value="PolC_DP2"/>
    <property type="match status" value="1"/>
</dbReference>
<name>DP2L_METBU</name>
<gene>
    <name evidence="2" type="primary">polC</name>
    <name type="ordered locus">Mbur_2423</name>
</gene>
<organism>
    <name type="scientific">Methanococcoides burtonii (strain DSM 6242 / NBRC 107633 / OCM 468 / ACE-M)</name>
    <dbReference type="NCBI Taxonomy" id="259564"/>
    <lineage>
        <taxon>Archaea</taxon>
        <taxon>Methanobacteriati</taxon>
        <taxon>Methanobacteriota</taxon>
        <taxon>Stenosarchaea group</taxon>
        <taxon>Methanomicrobia</taxon>
        <taxon>Methanosarcinales</taxon>
        <taxon>Methanosarcinaceae</taxon>
        <taxon>Methanococcoides</taxon>
    </lineage>
</organism>
<comment type="function">
    <text evidence="1">Possesses two activities: a DNA synthesis (polymerase) and an exonucleolytic activity that degrades single-stranded DNA in the 3'- to 5'-direction. Has a template-primer preference which is characteristic of a replicative DNA polymerase (By similarity).</text>
</comment>
<comment type="catalytic activity">
    <reaction evidence="2">
        <text>DNA(n) + a 2'-deoxyribonucleoside 5'-triphosphate = DNA(n+1) + diphosphate</text>
        <dbReference type="Rhea" id="RHEA:22508"/>
        <dbReference type="Rhea" id="RHEA-COMP:17339"/>
        <dbReference type="Rhea" id="RHEA-COMP:17340"/>
        <dbReference type="ChEBI" id="CHEBI:33019"/>
        <dbReference type="ChEBI" id="CHEBI:61560"/>
        <dbReference type="ChEBI" id="CHEBI:173112"/>
        <dbReference type="EC" id="2.7.7.7"/>
    </reaction>
</comment>
<comment type="catalytic activity">
    <reaction evidence="2">
        <text>Exonucleolytic cleavage in the 3'- to 5'-direction to yield nucleoside 5'-phosphates.</text>
        <dbReference type="EC" id="3.1.11.1"/>
    </reaction>
</comment>
<comment type="subunit">
    <text evidence="2">Heterodimer of a large subunit and a small subunit.</text>
</comment>
<comment type="similarity">
    <text evidence="2">Belongs to the archaeal DNA polymerase II family.</text>
</comment>
<comment type="sequence caution" evidence="4">
    <conflict type="erroneous initiation">
        <sequence resource="EMBL-CDS" id="ABE53274"/>
    </conflict>
</comment>